<evidence type="ECO:0000250" key="1"/>
<evidence type="ECO:0000255" key="2"/>
<evidence type="ECO:0000305" key="3"/>
<feature type="signal peptide" evidence="2">
    <location>
        <begin position="1"/>
        <end position="28"/>
    </location>
</feature>
<feature type="chain" id="PRO_0000286685" description="FPRL1 inhibitory protein">
    <location>
        <begin position="29"/>
        <end position="132"/>
    </location>
</feature>
<keyword id="KW-0964">Secreted</keyword>
<keyword id="KW-0732">Signal</keyword>
<keyword id="KW-0843">Virulence</keyword>
<organism>
    <name type="scientific">Staphylococcus aureus (strain MW2)</name>
    <dbReference type="NCBI Taxonomy" id="196620"/>
    <lineage>
        <taxon>Bacteria</taxon>
        <taxon>Bacillati</taxon>
        <taxon>Bacillota</taxon>
        <taxon>Bacilli</taxon>
        <taxon>Bacillales</taxon>
        <taxon>Staphylococcaceae</taxon>
        <taxon>Staphylococcus</taxon>
    </lineage>
</organism>
<reference key="1">
    <citation type="journal article" date="2002" name="Lancet">
        <title>Genome and virulence determinants of high virulence community-acquired MRSA.</title>
        <authorList>
            <person name="Baba T."/>
            <person name="Takeuchi F."/>
            <person name="Kuroda M."/>
            <person name="Yuzawa H."/>
            <person name="Aoki K."/>
            <person name="Oguchi A."/>
            <person name="Nagai Y."/>
            <person name="Iwama N."/>
            <person name="Asano K."/>
            <person name="Naimi T."/>
            <person name="Kuroda H."/>
            <person name="Cui L."/>
            <person name="Yamamoto K."/>
            <person name="Hiramatsu K."/>
        </authorList>
    </citation>
    <scope>NUCLEOTIDE SEQUENCE [LARGE SCALE GENOMIC DNA]</scope>
    <source>
        <strain>MW2</strain>
    </source>
</reference>
<proteinExistence type="inferred from homology"/>
<sequence>MKKNITKVIIASTVIATGLLTQTNDAKAFFSYEWKGLEIAKNLADQAKKDDERADKLIKEADEKNEHYKGKTVEDLYVIAKKMGKGNTIAVVKIKDGGKNGYYTFDITRPLEEHRKNIPVVKNGEIDSITWY</sequence>
<name>FLIPR_STAAW</name>
<comment type="function">
    <text evidence="1">May be involved in countering the first line of host defense mechanisms. Impairs the leukocyte response to FPRL1 agonists by binding directly to host FPRL1 (By similarity).</text>
</comment>
<comment type="subcellular location">
    <subcellularLocation>
        <location evidence="1">Secreted</location>
    </subcellularLocation>
</comment>
<comment type="similarity">
    <text evidence="3">Belongs to the CHIPS/FLIPr family.</text>
</comment>
<accession>Q8NX51</accession>
<dbReference type="EMBL" id="BA000033">
    <property type="protein sequence ID" value="BAB94903.1"/>
    <property type="molecule type" value="Genomic_DNA"/>
</dbReference>
<dbReference type="RefSeq" id="WP_000739582.1">
    <property type="nucleotide sequence ID" value="NC_003923.1"/>
</dbReference>
<dbReference type="SMR" id="Q8NX51"/>
<dbReference type="KEGG" id="sam:MW1038"/>
<dbReference type="HOGENOM" id="CLU_157996_0_0_9"/>
<dbReference type="GO" id="GO:0005576">
    <property type="term" value="C:extracellular region"/>
    <property type="evidence" value="ECO:0007669"/>
    <property type="project" value="UniProtKB-SubCell"/>
</dbReference>
<dbReference type="Gene3D" id="3.10.20.390">
    <property type="entry name" value="Chemotaxis-inhibiting protein CHIPS"/>
    <property type="match status" value="1"/>
</dbReference>
<dbReference type="InterPro" id="IPR023256">
    <property type="entry name" value="FLIPR"/>
</dbReference>
<dbReference type="InterPro" id="IPR038529">
    <property type="entry name" value="FLIPR/CHIP_sf"/>
</dbReference>
<dbReference type="InterPro" id="IPR023253">
    <property type="entry name" value="FLIPR/CHIPS"/>
</dbReference>
<dbReference type="NCBIfam" id="NF009592">
    <property type="entry name" value="PRK13033.1"/>
    <property type="match status" value="1"/>
</dbReference>
<dbReference type="Pfam" id="PF16104">
    <property type="entry name" value="FPRL1_inhibitor"/>
    <property type="match status" value="1"/>
</dbReference>
<dbReference type="PRINTS" id="PR02037">
    <property type="entry name" value="FLIPR"/>
</dbReference>
<dbReference type="PRINTS" id="PR02035">
    <property type="entry name" value="FLIPRCHIPS"/>
</dbReference>
<gene>
    <name type="primary">flr</name>
    <name type="ordered locus">MW1038</name>
</gene>
<protein>
    <recommendedName>
        <fullName>FPRL1 inhibitory protein</fullName>
        <shortName>FLIPr</shortName>
    </recommendedName>
</protein>